<protein>
    <recommendedName>
        <fullName>Segment polarity protein dishevelled homolog DVL-1</fullName>
        <shortName>Dishevelled-1</shortName>
    </recommendedName>
    <alternativeName>
        <fullName>DSH homolog 1</fullName>
    </alternativeName>
</protein>
<keyword id="KW-1003">Cell membrane</keyword>
<keyword id="KW-0963">Cytoplasm</keyword>
<keyword id="KW-0968">Cytoplasmic vesicle</keyword>
<keyword id="KW-0217">Developmental protein</keyword>
<keyword id="KW-0472">Membrane</keyword>
<keyword id="KW-0597">Phosphoprotein</keyword>
<keyword id="KW-1185">Reference proteome</keyword>
<keyword id="KW-0832">Ubl conjugation</keyword>
<keyword id="KW-0879">Wnt signaling pathway</keyword>
<sequence>MAETKIIYHMDEEETPYLVKLPVAPERVTLADFKNVLSNRPVHAYKFFFKSMDQDFGVVKEEIFDDNAKLPCFNGRVVSWLVLAEGAHSDAGSQGTDSHTDLPPPLERTGGIGDSRPPSFHPNVASSRDGMDNETGTESMVSHRRERARRRNRDEAARTNGHPRGDRRRELGLPPDSASTVLSSELESSSFIDSDEEDNTSRLSSSTEQSTSSRLIRKHKCRRRKQRLRQTDRASSFSSITDSTMSLNIITVTLNMERHHFLGISIVGQSNDRGDGGIYIGSIMKGGAVAADGRIEPGDMLLQVNDVNFENMSNDDAVRVLREIVSQTGPISLTVAKCWDPTPRSYFTIPRADPVRPIDPAAWLSHTAALTGALPRYGTSPCSSAITRTSSSSLTSSVPGAPQLEEAPLTVKSDMSAIVRVMQLPDSGLEIRDRMWLKITIANAVIGADVVDWLYTHVEGFKERREARKYASSMLKHGFLRHTVNKITFSEQCYYVFGDLCSNLASLNLNSGSSGASDQDTLAPLPHPSVPWPLGQGYPYQYPGPPPCFPPAYQDPGFSYGSGSAGSQQSEGSKSSGSTRSSHRTPGREERRATGAGGSGSESDHTVPSGSGSTGWWERPVSQLSRGSSPRSQASAVAPGLPPLHPLTKAYAVVGGPPGGPPVRELAAVPPELTGSRQSFQKAMGNPCEFFVDIM</sequence>
<comment type="function">
    <text evidence="1">Participates in Wnt signaling by binding to the cytoplasmic C-terminus of frizzled family members and transducing the Wnt signal to down-stream effectors. Plays a role both in canonical and non-canonical Wnt signaling. Plays a role in the signal transduction pathways mediated by multiple Wnt genes. Required for LEF1 activation upon WNT1 and WNT3A signaling. DVL1 and PAK1 form a ternary complex with MUSK which is important for MUSK-dependent regulation of AChR clustering during the formation of the neuromuscular junction (NMJ) (By similarity).</text>
</comment>
<comment type="subunit">
    <text evidence="2 3">Interacts with BRD7 and INVS. Interacts (via PDZ domain) with the VANGL1 and VANGL2 (via C-terminus). Interacts (via PDZ domain) with NXN. Interacts with CXXC4. Interacts with ARRB1; the interaction is enhanced by phosphorylation of DVL1. Interacts with CYLD. Interacts (via PDZ domain) with RYK. Self-associates (via DIX domain) and forms higher homooligomers. Interacts (via PDZ domain) with DACT1 and FZD7, where DACT1 and FZD7 compete for the same binding site. Interacts (via DEP domain) with MUSK; the interaction is direct and mediates the formation a DVL1, MUSK and PAK1 ternary complex involved in AChR clustering. Interacts (via PDZ domain) with TMEM88 (By similarity). Interacts with DCDC2. Interacts with FOXK2 (By similarity). Interacts with PKD1 (via extracellular domain) (By similarity). Interacts (via PDZ domain) with CCDC88C/DAPLE; competes with CCDC88C for binding to frizzled receptor FZD7 and dissociates from CCDC88C following initiation of non-canonical Wnt signaling when CCDC88C displaces DVL1 from ligand-activated FZD7 (By similarity).</text>
</comment>
<comment type="subcellular location">
    <subcellularLocation>
        <location evidence="1">Cell membrane</location>
        <topology evidence="1">Peripheral membrane protein</topology>
        <orientation evidence="1">Cytoplasmic side</orientation>
    </subcellularLocation>
    <subcellularLocation>
        <location evidence="1">Cytoplasm</location>
        <location evidence="1">Cytosol</location>
    </subcellularLocation>
    <subcellularLocation>
        <location evidence="1">Cytoplasmic vesicle</location>
    </subcellularLocation>
    <text evidence="1">Localizes at the cell membrane upon interaction with frizzled family members.</text>
</comment>
<comment type="domain">
    <text evidence="1">The DIX domain promotes homooligomerization.</text>
</comment>
<comment type="domain">
    <text evidence="1">The DEP domain mediates interaction with the cell membrane.</text>
</comment>
<comment type="PTM">
    <text evidence="1">Ubiquitinated; undergoes both 'Lys-48'-linked ubiquitination, leading to its subsequent degradation by the ubiquitin-proteasome pathway, and 'Lys-63'-linked ubiquitination. The interaction with INVS is required for ubiquitination. Deubiquitinated by CYLD, which acts on 'Lys-63'-linked ubiquitin chains (By similarity).</text>
</comment>
<comment type="similarity">
    <text evidence="8">Belongs to the DSH family.</text>
</comment>
<organism>
    <name type="scientific">Rattus norvegicus</name>
    <name type="common">Rat</name>
    <dbReference type="NCBI Taxonomy" id="10116"/>
    <lineage>
        <taxon>Eukaryota</taxon>
        <taxon>Metazoa</taxon>
        <taxon>Chordata</taxon>
        <taxon>Craniata</taxon>
        <taxon>Vertebrata</taxon>
        <taxon>Euteleostomi</taxon>
        <taxon>Mammalia</taxon>
        <taxon>Eutheria</taxon>
        <taxon>Euarchontoglires</taxon>
        <taxon>Glires</taxon>
        <taxon>Rodentia</taxon>
        <taxon>Myomorpha</taxon>
        <taxon>Muroidea</taxon>
        <taxon>Muridae</taxon>
        <taxon>Murinae</taxon>
        <taxon>Rattus</taxon>
    </lineage>
</organism>
<name>DVL1_RAT</name>
<evidence type="ECO:0000250" key="1"/>
<evidence type="ECO:0000250" key="2">
    <source>
        <dbReference type="UniProtKB" id="O14640"/>
    </source>
</evidence>
<evidence type="ECO:0000250" key="3">
    <source>
        <dbReference type="UniProtKB" id="P51141"/>
    </source>
</evidence>
<evidence type="ECO:0000255" key="4">
    <source>
        <dbReference type="PROSITE-ProRule" id="PRU00066"/>
    </source>
</evidence>
<evidence type="ECO:0000255" key="5">
    <source>
        <dbReference type="PROSITE-ProRule" id="PRU00069"/>
    </source>
</evidence>
<evidence type="ECO:0000255" key="6">
    <source>
        <dbReference type="PROSITE-ProRule" id="PRU00143"/>
    </source>
</evidence>
<evidence type="ECO:0000256" key="7">
    <source>
        <dbReference type="SAM" id="MobiDB-lite"/>
    </source>
</evidence>
<evidence type="ECO:0000305" key="8"/>
<evidence type="ECO:0007744" key="9">
    <source>
    </source>
</evidence>
<accession>Q9WVB9</accession>
<accession>Q9QUG5</accession>
<accession>Q9WVB8</accession>
<gene>
    <name type="primary">Dvl1</name>
</gene>
<feature type="chain" id="PRO_0000145745" description="Segment polarity protein dishevelled homolog DVL-1">
    <location>
        <begin position="1"/>
        <end position="695"/>
    </location>
</feature>
<feature type="domain" description="DIX" evidence="5">
    <location>
        <begin position="1"/>
        <end position="85"/>
    </location>
</feature>
<feature type="domain" description="PDZ" evidence="6">
    <location>
        <begin position="251"/>
        <end position="323"/>
    </location>
</feature>
<feature type="domain" description="DEP" evidence="4">
    <location>
        <begin position="425"/>
        <end position="499"/>
    </location>
</feature>
<feature type="region of interest" description="Disordered" evidence="7">
    <location>
        <begin position="89"/>
        <end position="236"/>
    </location>
</feature>
<feature type="region of interest" description="Disordered" evidence="7">
    <location>
        <begin position="551"/>
        <end position="641"/>
    </location>
</feature>
<feature type="compositionally biased region" description="Basic residues" evidence="7">
    <location>
        <begin position="142"/>
        <end position="151"/>
    </location>
</feature>
<feature type="compositionally biased region" description="Basic and acidic residues" evidence="7">
    <location>
        <begin position="152"/>
        <end position="171"/>
    </location>
</feature>
<feature type="compositionally biased region" description="Low complexity" evidence="7">
    <location>
        <begin position="177"/>
        <end position="192"/>
    </location>
</feature>
<feature type="compositionally biased region" description="Low complexity" evidence="7">
    <location>
        <begin position="201"/>
        <end position="214"/>
    </location>
</feature>
<feature type="compositionally biased region" description="Basic residues" evidence="7">
    <location>
        <begin position="215"/>
        <end position="228"/>
    </location>
</feature>
<feature type="compositionally biased region" description="Low complexity" evidence="7">
    <location>
        <begin position="551"/>
        <end position="580"/>
    </location>
</feature>
<feature type="compositionally biased region" description="Polar residues" evidence="7">
    <location>
        <begin position="622"/>
        <end position="635"/>
    </location>
</feature>
<feature type="modified residue" description="Phosphoserine" evidence="9">
    <location>
        <position position="194"/>
    </location>
</feature>
<proteinExistence type="evidence at protein level"/>
<dbReference type="EMBL" id="AF143545">
    <property type="protein sequence ID" value="AAD33896.2"/>
    <property type="molecule type" value="mRNA"/>
</dbReference>
<dbReference type="EMBL" id="AF143546">
    <property type="protein sequence ID" value="AAD33897.2"/>
    <property type="molecule type" value="mRNA"/>
</dbReference>
<dbReference type="EMBL" id="AF143548">
    <property type="protein sequence ID" value="AAD41492.2"/>
    <property type="molecule type" value="Genomic_DNA"/>
</dbReference>
<dbReference type="EMBL" id="AF143547">
    <property type="protein sequence ID" value="AAD41492.2"/>
    <property type="status" value="JOINED"/>
    <property type="molecule type" value="Genomic_DNA"/>
</dbReference>
<dbReference type="EMBL" id="AF143550">
    <property type="protein sequence ID" value="AAD41493.1"/>
    <property type="molecule type" value="Genomic_DNA"/>
</dbReference>
<dbReference type="EMBL" id="AF143549">
    <property type="protein sequence ID" value="AAD41493.1"/>
    <property type="status" value="JOINED"/>
    <property type="molecule type" value="Genomic_DNA"/>
</dbReference>
<dbReference type="RefSeq" id="NP_114008.1">
    <property type="nucleotide sequence ID" value="NM_031820.1"/>
</dbReference>
<dbReference type="SMR" id="Q9WVB9"/>
<dbReference type="BioGRID" id="249815">
    <property type="interactions" value="5"/>
</dbReference>
<dbReference type="FunCoup" id="Q9WVB9">
    <property type="interactions" value="1418"/>
</dbReference>
<dbReference type="IntAct" id="Q9WVB9">
    <property type="interactions" value="1"/>
</dbReference>
<dbReference type="STRING" id="10116.ENSRNOP00000026439"/>
<dbReference type="iPTMnet" id="Q9WVB9"/>
<dbReference type="PhosphoSitePlus" id="Q9WVB9"/>
<dbReference type="PaxDb" id="10116-ENSRNOP00000026439"/>
<dbReference type="Ensembl" id="ENSRNOT00000026439.6">
    <property type="protein sequence ID" value="ENSRNOP00000026439.5"/>
    <property type="gene ID" value="ENSRNOG00000019423.6"/>
</dbReference>
<dbReference type="GeneID" id="83721"/>
<dbReference type="KEGG" id="rno:83721"/>
<dbReference type="AGR" id="RGD:620632"/>
<dbReference type="CTD" id="1855"/>
<dbReference type="RGD" id="620632">
    <property type="gene designation" value="Dvl1"/>
</dbReference>
<dbReference type="eggNOG" id="KOG3571">
    <property type="taxonomic scope" value="Eukaryota"/>
</dbReference>
<dbReference type="GeneTree" id="ENSGT00950000182903"/>
<dbReference type="HOGENOM" id="CLU_012601_1_0_1"/>
<dbReference type="InParanoid" id="Q9WVB9"/>
<dbReference type="OMA" id="GTFPRYG"/>
<dbReference type="OrthoDB" id="10031689at2759"/>
<dbReference type="PhylomeDB" id="Q9WVB9"/>
<dbReference type="TreeFam" id="TF318198"/>
<dbReference type="Reactome" id="R-RNO-201688">
    <property type="pathway name" value="WNT mediated activation of DVL"/>
</dbReference>
<dbReference type="Reactome" id="R-RNO-4086400">
    <property type="pathway name" value="PCP/CE pathway"/>
</dbReference>
<dbReference type="Reactome" id="R-RNO-4641258">
    <property type="pathway name" value="Degradation of DVL"/>
</dbReference>
<dbReference type="Reactome" id="R-RNO-4641262">
    <property type="pathway name" value="Disassembly of the destruction complex and recruitment of AXIN to the membrane"/>
</dbReference>
<dbReference type="Reactome" id="R-RNO-5663220">
    <property type="pathway name" value="RHO GTPases Activate Formins"/>
</dbReference>
<dbReference type="PRO" id="PR:Q9WVB9"/>
<dbReference type="Proteomes" id="UP000002494">
    <property type="component" value="Chromosome 5"/>
</dbReference>
<dbReference type="Bgee" id="ENSRNOG00000019423">
    <property type="expression patterns" value="Expressed in skeletal muscle tissue and 20 other cell types or tissues"/>
</dbReference>
<dbReference type="GO" id="GO:0030424">
    <property type="term" value="C:axon"/>
    <property type="evidence" value="ECO:0000314"/>
    <property type="project" value="RGD"/>
</dbReference>
<dbReference type="GO" id="GO:0030136">
    <property type="term" value="C:clathrin-coated vesicle"/>
    <property type="evidence" value="ECO:0000266"/>
    <property type="project" value="RGD"/>
</dbReference>
<dbReference type="GO" id="GO:0005737">
    <property type="term" value="C:cytoplasm"/>
    <property type="evidence" value="ECO:0000266"/>
    <property type="project" value="RGD"/>
</dbReference>
<dbReference type="GO" id="GO:0031410">
    <property type="term" value="C:cytoplasmic vesicle"/>
    <property type="evidence" value="ECO:0000266"/>
    <property type="project" value="RGD"/>
</dbReference>
<dbReference type="GO" id="GO:0005829">
    <property type="term" value="C:cytosol"/>
    <property type="evidence" value="ECO:0000266"/>
    <property type="project" value="RGD"/>
</dbReference>
<dbReference type="GO" id="GO:0030425">
    <property type="term" value="C:dendrite"/>
    <property type="evidence" value="ECO:0000314"/>
    <property type="project" value="RGD"/>
</dbReference>
<dbReference type="GO" id="GO:0043197">
    <property type="term" value="C:dendritic spine"/>
    <property type="evidence" value="ECO:0000314"/>
    <property type="project" value="ParkinsonsUK-UCL"/>
</dbReference>
<dbReference type="GO" id="GO:0098978">
    <property type="term" value="C:glutamatergic synapse"/>
    <property type="evidence" value="ECO:0000266"/>
    <property type="project" value="RGD"/>
</dbReference>
<dbReference type="GO" id="GO:0030426">
    <property type="term" value="C:growth cone"/>
    <property type="evidence" value="ECO:0000314"/>
    <property type="project" value="RGD"/>
</dbReference>
<dbReference type="GO" id="GO:0016328">
    <property type="term" value="C:lateral plasma membrane"/>
    <property type="evidence" value="ECO:0000266"/>
    <property type="project" value="RGD"/>
</dbReference>
<dbReference type="GO" id="GO:0005874">
    <property type="term" value="C:microtubule"/>
    <property type="evidence" value="ECO:0000314"/>
    <property type="project" value="RGD"/>
</dbReference>
<dbReference type="GO" id="GO:0015630">
    <property type="term" value="C:microtubule cytoskeleton"/>
    <property type="evidence" value="ECO:0000314"/>
    <property type="project" value="MGI"/>
</dbReference>
<dbReference type="GO" id="GO:0043005">
    <property type="term" value="C:neuron projection"/>
    <property type="evidence" value="ECO:0000266"/>
    <property type="project" value="RGD"/>
</dbReference>
<dbReference type="GO" id="GO:0043025">
    <property type="term" value="C:neuronal cell body"/>
    <property type="evidence" value="ECO:0000314"/>
    <property type="project" value="RGD"/>
</dbReference>
<dbReference type="GO" id="GO:0098992">
    <property type="term" value="C:neuronal dense core vesicle"/>
    <property type="evidence" value="ECO:0000266"/>
    <property type="project" value="RGD"/>
</dbReference>
<dbReference type="GO" id="GO:0005886">
    <property type="term" value="C:plasma membrane"/>
    <property type="evidence" value="ECO:0000250"/>
    <property type="project" value="UniProtKB"/>
</dbReference>
<dbReference type="GO" id="GO:0014069">
    <property type="term" value="C:postsynaptic density"/>
    <property type="evidence" value="ECO:0000314"/>
    <property type="project" value="ParkinsonsUK-UCL"/>
</dbReference>
<dbReference type="GO" id="GO:0098793">
    <property type="term" value="C:presynapse"/>
    <property type="evidence" value="ECO:0000266"/>
    <property type="project" value="RGD"/>
</dbReference>
<dbReference type="GO" id="GO:0098685">
    <property type="term" value="C:Schaffer collateral - CA1 synapse"/>
    <property type="evidence" value="ECO:0000266"/>
    <property type="project" value="RGD"/>
</dbReference>
<dbReference type="GO" id="GO:0045202">
    <property type="term" value="C:synapse"/>
    <property type="evidence" value="ECO:0000266"/>
    <property type="project" value="RGD"/>
</dbReference>
<dbReference type="GO" id="GO:1990909">
    <property type="term" value="C:Wnt signalosome"/>
    <property type="evidence" value="ECO:0000266"/>
    <property type="project" value="RGD"/>
</dbReference>
<dbReference type="GO" id="GO:0008013">
    <property type="term" value="F:beta-catenin binding"/>
    <property type="evidence" value="ECO:0000266"/>
    <property type="project" value="RGD"/>
</dbReference>
<dbReference type="GO" id="GO:0019899">
    <property type="term" value="F:enzyme binding"/>
    <property type="evidence" value="ECO:0000266"/>
    <property type="project" value="RGD"/>
</dbReference>
<dbReference type="GO" id="GO:0005109">
    <property type="term" value="F:frizzled binding"/>
    <property type="evidence" value="ECO:0000266"/>
    <property type="project" value="RGD"/>
</dbReference>
<dbReference type="GO" id="GO:0042802">
    <property type="term" value="F:identical protein binding"/>
    <property type="evidence" value="ECO:0000266"/>
    <property type="project" value="RGD"/>
</dbReference>
<dbReference type="GO" id="GO:0019901">
    <property type="term" value="F:protein kinase binding"/>
    <property type="evidence" value="ECO:0000353"/>
    <property type="project" value="RGD"/>
</dbReference>
<dbReference type="GO" id="GO:0031267">
    <property type="term" value="F:small GTPase binding"/>
    <property type="evidence" value="ECO:0000353"/>
    <property type="project" value="RGD"/>
</dbReference>
<dbReference type="GO" id="GO:0048675">
    <property type="term" value="P:axon extension"/>
    <property type="evidence" value="ECO:0000266"/>
    <property type="project" value="RGD"/>
</dbReference>
<dbReference type="GO" id="GO:0007411">
    <property type="term" value="P:axon guidance"/>
    <property type="evidence" value="ECO:0000266"/>
    <property type="project" value="RGD"/>
</dbReference>
<dbReference type="GO" id="GO:0007409">
    <property type="term" value="P:axonogenesis"/>
    <property type="evidence" value="ECO:0000266"/>
    <property type="project" value="RGD"/>
</dbReference>
<dbReference type="GO" id="GO:0060070">
    <property type="term" value="P:canonical Wnt signaling pathway"/>
    <property type="evidence" value="ECO:0000266"/>
    <property type="project" value="RGD"/>
</dbReference>
<dbReference type="GO" id="GO:0090103">
    <property type="term" value="P:cochlea morphogenesis"/>
    <property type="evidence" value="ECO:0000266"/>
    <property type="project" value="RGD"/>
</dbReference>
<dbReference type="GO" id="GO:0048668">
    <property type="term" value="P:collateral sprouting"/>
    <property type="evidence" value="ECO:0000266"/>
    <property type="project" value="RGD"/>
</dbReference>
<dbReference type="GO" id="GO:0022007">
    <property type="term" value="P:convergent extension involved in neural plate elongation"/>
    <property type="evidence" value="ECO:0000266"/>
    <property type="project" value="RGD"/>
</dbReference>
<dbReference type="GO" id="GO:0060029">
    <property type="term" value="P:convergent extension involved in organogenesis"/>
    <property type="evidence" value="ECO:0000266"/>
    <property type="project" value="RGD"/>
</dbReference>
<dbReference type="GO" id="GO:0031122">
    <property type="term" value="P:cytoplasmic microtubule organization"/>
    <property type="evidence" value="ECO:0000266"/>
    <property type="project" value="RGD"/>
</dbReference>
<dbReference type="GO" id="GO:0048813">
    <property type="term" value="P:dendrite morphogenesis"/>
    <property type="evidence" value="ECO:0000266"/>
    <property type="project" value="RGD"/>
</dbReference>
<dbReference type="GO" id="GO:0060997">
    <property type="term" value="P:dendritic spine morphogenesis"/>
    <property type="evidence" value="ECO:0000316"/>
    <property type="project" value="ParkinsonsUK-UCL"/>
</dbReference>
<dbReference type="GO" id="GO:0001947">
    <property type="term" value="P:heart looping"/>
    <property type="evidence" value="ECO:0000266"/>
    <property type="project" value="RGD"/>
</dbReference>
<dbReference type="GO" id="GO:0035556">
    <property type="term" value="P:intracellular signal transduction"/>
    <property type="evidence" value="ECO:0007669"/>
    <property type="project" value="InterPro"/>
</dbReference>
<dbReference type="GO" id="GO:0021915">
    <property type="term" value="P:neural tube development"/>
    <property type="evidence" value="ECO:0000266"/>
    <property type="project" value="RGD"/>
</dbReference>
<dbReference type="GO" id="GO:0007528">
    <property type="term" value="P:neuromuscular junction development"/>
    <property type="evidence" value="ECO:0000266"/>
    <property type="project" value="RGD"/>
</dbReference>
<dbReference type="GO" id="GO:0007269">
    <property type="term" value="P:neurotransmitter secretion"/>
    <property type="evidence" value="ECO:0000266"/>
    <property type="project" value="RGD"/>
</dbReference>
<dbReference type="GO" id="GO:0003151">
    <property type="term" value="P:outflow tract morphogenesis"/>
    <property type="evidence" value="ECO:0000266"/>
    <property type="project" value="RGD"/>
</dbReference>
<dbReference type="GO" id="GO:2000463">
    <property type="term" value="P:positive regulation of excitatory postsynaptic potential"/>
    <property type="evidence" value="ECO:0000316"/>
    <property type="project" value="ParkinsonsUK-UCL"/>
</dbReference>
<dbReference type="GO" id="GO:0150012">
    <property type="term" value="P:positive regulation of neuron projection arborization"/>
    <property type="evidence" value="ECO:0000316"/>
    <property type="project" value="ARUK-UCL"/>
</dbReference>
<dbReference type="GO" id="GO:0010976">
    <property type="term" value="P:positive regulation of neuron projection development"/>
    <property type="evidence" value="ECO:0000266"/>
    <property type="project" value="RGD"/>
</dbReference>
<dbReference type="GO" id="GO:0032436">
    <property type="term" value="P:positive regulation of proteasomal ubiquitin-dependent protein catabolic process"/>
    <property type="evidence" value="ECO:0000266"/>
    <property type="project" value="RGD"/>
</dbReference>
<dbReference type="GO" id="GO:0045944">
    <property type="term" value="P:positive regulation of transcription by RNA polymerase II"/>
    <property type="evidence" value="ECO:0000266"/>
    <property type="project" value="RGD"/>
</dbReference>
<dbReference type="GO" id="GO:0099173">
    <property type="term" value="P:postsynapse organization"/>
    <property type="evidence" value="ECO:0000266"/>
    <property type="project" value="RGD"/>
</dbReference>
<dbReference type="GO" id="GO:0060134">
    <property type="term" value="P:prepulse inhibition"/>
    <property type="evidence" value="ECO:0000266"/>
    <property type="project" value="RGD"/>
</dbReference>
<dbReference type="GO" id="GO:0099054">
    <property type="term" value="P:presynapse assembly"/>
    <property type="evidence" value="ECO:0000266"/>
    <property type="project" value="RGD"/>
</dbReference>
<dbReference type="GO" id="GO:0035372">
    <property type="term" value="P:protein localization to microtubule"/>
    <property type="evidence" value="ECO:0000266"/>
    <property type="project" value="RGD"/>
</dbReference>
<dbReference type="GO" id="GO:0034504">
    <property type="term" value="P:protein localization to nucleus"/>
    <property type="evidence" value="ECO:0000266"/>
    <property type="project" value="RGD"/>
</dbReference>
<dbReference type="GO" id="GO:0050821">
    <property type="term" value="P:protein stabilization"/>
    <property type="evidence" value="ECO:0000266"/>
    <property type="project" value="RGD"/>
</dbReference>
<dbReference type="GO" id="GO:0043113">
    <property type="term" value="P:receptor clustering"/>
    <property type="evidence" value="ECO:0000266"/>
    <property type="project" value="RGD"/>
</dbReference>
<dbReference type="GO" id="GO:0006355">
    <property type="term" value="P:regulation of DNA-templated transcription"/>
    <property type="evidence" value="ECO:0000266"/>
    <property type="project" value="RGD"/>
</dbReference>
<dbReference type="GO" id="GO:0099175">
    <property type="term" value="P:regulation of postsynapse organization"/>
    <property type="evidence" value="ECO:0000266"/>
    <property type="project" value="RGD"/>
</dbReference>
<dbReference type="GO" id="GO:0032880">
    <property type="term" value="P:regulation of protein localization"/>
    <property type="evidence" value="ECO:0000266"/>
    <property type="project" value="RGD"/>
</dbReference>
<dbReference type="GO" id="GO:2000300">
    <property type="term" value="P:regulation of synaptic vesicle exocytosis"/>
    <property type="evidence" value="ECO:0000266"/>
    <property type="project" value="RGD"/>
</dbReference>
<dbReference type="GO" id="GO:0071340">
    <property type="term" value="P:skeletal muscle acetylcholine-gated channel clustering"/>
    <property type="evidence" value="ECO:0000266"/>
    <property type="project" value="RGD"/>
</dbReference>
<dbReference type="GO" id="GO:0035176">
    <property type="term" value="P:social behavior"/>
    <property type="evidence" value="ECO:0000266"/>
    <property type="project" value="RGD"/>
</dbReference>
<dbReference type="GO" id="GO:0050808">
    <property type="term" value="P:synapse organization"/>
    <property type="evidence" value="ECO:0000266"/>
    <property type="project" value="RGD"/>
</dbReference>
<dbReference type="GO" id="GO:0016079">
    <property type="term" value="P:synaptic vesicle exocytosis"/>
    <property type="evidence" value="ECO:0000266"/>
    <property type="project" value="RGD"/>
</dbReference>
<dbReference type="GO" id="GO:0016055">
    <property type="term" value="P:Wnt signaling pathway"/>
    <property type="evidence" value="ECO:0000316"/>
    <property type="project" value="ParkinsonsUK-UCL"/>
</dbReference>
<dbReference type="GO" id="GO:0060071">
    <property type="term" value="P:Wnt signaling pathway, planar cell polarity pathway"/>
    <property type="evidence" value="ECO:0000266"/>
    <property type="project" value="RGD"/>
</dbReference>
<dbReference type="CDD" id="cd04438">
    <property type="entry name" value="DEP_dishevelled"/>
    <property type="match status" value="1"/>
</dbReference>
<dbReference type="CDD" id="cd06717">
    <property type="entry name" value="PDZ_Dishevelled-like"/>
    <property type="match status" value="1"/>
</dbReference>
<dbReference type="FunFam" id="2.40.240.130:FF:000001">
    <property type="entry name" value="Segment polarity protein dishevelled homolog DVL-1"/>
    <property type="match status" value="1"/>
</dbReference>
<dbReference type="FunFam" id="2.30.42.10:FF:000014">
    <property type="entry name" value="Segment polarity protein dishevelled homolog DVL-3"/>
    <property type="match status" value="1"/>
</dbReference>
<dbReference type="FunFam" id="1.10.10.10:FF:000040">
    <property type="entry name" value="segment polarity protein dishevelled homolog DVL-3"/>
    <property type="match status" value="1"/>
</dbReference>
<dbReference type="Gene3D" id="2.30.42.10">
    <property type="match status" value="1"/>
</dbReference>
<dbReference type="Gene3D" id="2.40.240.130">
    <property type="match status" value="1"/>
</dbReference>
<dbReference type="Gene3D" id="1.10.10.10">
    <property type="entry name" value="Winged helix-like DNA-binding domain superfamily/Winged helix DNA-binding domain"/>
    <property type="match status" value="1"/>
</dbReference>
<dbReference type="InterPro" id="IPR000591">
    <property type="entry name" value="DEP_dom"/>
</dbReference>
<dbReference type="InterPro" id="IPR024580">
    <property type="entry name" value="Dishevelled_C-dom"/>
</dbReference>
<dbReference type="InterPro" id="IPR008339">
    <property type="entry name" value="Dishevelled_fam"/>
</dbReference>
<dbReference type="InterPro" id="IPR003351">
    <property type="entry name" value="Dishevelled_protein_dom"/>
</dbReference>
<dbReference type="InterPro" id="IPR001158">
    <property type="entry name" value="DIX"/>
</dbReference>
<dbReference type="InterPro" id="IPR038207">
    <property type="entry name" value="DIX_dom_sf"/>
</dbReference>
<dbReference type="InterPro" id="IPR015506">
    <property type="entry name" value="Dsh/Dvl-rel"/>
</dbReference>
<dbReference type="InterPro" id="IPR001478">
    <property type="entry name" value="PDZ"/>
</dbReference>
<dbReference type="InterPro" id="IPR036034">
    <property type="entry name" value="PDZ_sf"/>
</dbReference>
<dbReference type="InterPro" id="IPR029071">
    <property type="entry name" value="Ubiquitin-like_domsf"/>
</dbReference>
<dbReference type="InterPro" id="IPR036388">
    <property type="entry name" value="WH-like_DNA-bd_sf"/>
</dbReference>
<dbReference type="InterPro" id="IPR036390">
    <property type="entry name" value="WH_DNA-bd_sf"/>
</dbReference>
<dbReference type="PANTHER" id="PTHR10878">
    <property type="entry name" value="SEGMENT POLARITY PROTEIN DISHEVELLED"/>
    <property type="match status" value="1"/>
</dbReference>
<dbReference type="PANTHER" id="PTHR10878:SF5">
    <property type="entry name" value="SEGMENT POLARITY PROTEIN DISHEVELLED HOMOLOG DVL-1-RELATED"/>
    <property type="match status" value="1"/>
</dbReference>
<dbReference type="Pfam" id="PF00610">
    <property type="entry name" value="DEP"/>
    <property type="match status" value="1"/>
</dbReference>
<dbReference type="Pfam" id="PF02377">
    <property type="entry name" value="Dishevelled"/>
    <property type="match status" value="1"/>
</dbReference>
<dbReference type="Pfam" id="PF00778">
    <property type="entry name" value="DIX"/>
    <property type="match status" value="1"/>
</dbReference>
<dbReference type="Pfam" id="PF12316">
    <property type="entry name" value="Dsh_C"/>
    <property type="match status" value="1"/>
</dbReference>
<dbReference type="Pfam" id="PF00595">
    <property type="entry name" value="PDZ"/>
    <property type="match status" value="1"/>
</dbReference>
<dbReference type="PRINTS" id="PR01760">
    <property type="entry name" value="DISHEVELLED"/>
</dbReference>
<dbReference type="PRINTS" id="PR01761">
    <property type="entry name" value="DISHEVELLED1"/>
</dbReference>
<dbReference type="SMART" id="SM00021">
    <property type="entry name" value="DAX"/>
    <property type="match status" value="1"/>
</dbReference>
<dbReference type="SMART" id="SM00049">
    <property type="entry name" value="DEP"/>
    <property type="match status" value="1"/>
</dbReference>
<dbReference type="SMART" id="SM00228">
    <property type="entry name" value="PDZ"/>
    <property type="match status" value="1"/>
</dbReference>
<dbReference type="SUPFAM" id="SSF50156">
    <property type="entry name" value="PDZ domain-like"/>
    <property type="match status" value="1"/>
</dbReference>
<dbReference type="SUPFAM" id="SSF54236">
    <property type="entry name" value="Ubiquitin-like"/>
    <property type="match status" value="1"/>
</dbReference>
<dbReference type="SUPFAM" id="SSF46785">
    <property type="entry name" value="Winged helix' DNA-binding domain"/>
    <property type="match status" value="1"/>
</dbReference>
<dbReference type="PROSITE" id="PS50186">
    <property type="entry name" value="DEP"/>
    <property type="match status" value="1"/>
</dbReference>
<dbReference type="PROSITE" id="PS50841">
    <property type="entry name" value="DIX"/>
    <property type="match status" value="1"/>
</dbReference>
<dbReference type="PROSITE" id="PS50106">
    <property type="entry name" value="PDZ"/>
    <property type="match status" value="1"/>
</dbReference>
<reference key="1">
    <citation type="journal article" date="2001" name="Neurogenetics">
        <title>Mapping and sequencing rat dishevelled-1: a candidate gene for cerebral ischaemic insult in a rat model of stroke.</title>
        <authorList>
            <person name="de Lange R.P.J."/>
            <person name="Burr K."/>
            <person name="Clark J.S."/>
            <person name="Negrin C.D."/>
            <person name="Brosnan M.J."/>
            <person name="St Clair D.M."/>
            <person name="Dominiczak A.F."/>
            <person name="Shaw D.J."/>
        </authorList>
    </citation>
    <scope>NUCLEOTIDE SEQUENCE [GENOMIC DNA / MRNA]</scope>
    <source>
        <strain>Wistar Kyoto</strain>
    </source>
</reference>
<reference key="2">
    <citation type="journal article" date="2001" name="Mol. Cell. Biol.">
        <title>Inhibition of the Wnt signaling pathway by Idax, a novel Dvl-binding protein.</title>
        <authorList>
            <person name="Hino S."/>
            <person name="Kishida S."/>
            <person name="Michiue T."/>
            <person name="Fukui A."/>
            <person name="Sakamoto I."/>
            <person name="Takada S."/>
            <person name="Asashima M."/>
            <person name="Kikuchi A."/>
        </authorList>
    </citation>
    <scope>INTERACTION WITH CXXC4</scope>
</reference>
<reference key="3">
    <citation type="journal article" date="2012" name="Nat. Commun.">
        <title>Quantitative maps of protein phosphorylation sites across 14 different rat organs and tissues.</title>
        <authorList>
            <person name="Lundby A."/>
            <person name="Secher A."/>
            <person name="Lage K."/>
            <person name="Nordsborg N.B."/>
            <person name="Dmytriyev A."/>
            <person name="Lundby C."/>
            <person name="Olsen J.V."/>
        </authorList>
    </citation>
    <scope>PHOSPHORYLATION [LARGE SCALE ANALYSIS] AT SER-194</scope>
    <scope>IDENTIFICATION BY MASS SPECTROMETRY [LARGE SCALE ANALYSIS]</scope>
</reference>